<evidence type="ECO:0000255" key="1">
    <source>
        <dbReference type="HAMAP-Rule" id="MF_00446"/>
    </source>
</evidence>
<reference key="1">
    <citation type="submission" date="2005-08" db="EMBL/GenBank/DDBJ databases">
        <title>Complete sequence of Pelodictyon luteolum DSM 273.</title>
        <authorList>
            <consortium name="US DOE Joint Genome Institute"/>
            <person name="Copeland A."/>
            <person name="Lucas S."/>
            <person name="Lapidus A."/>
            <person name="Barry K."/>
            <person name="Detter J.C."/>
            <person name="Glavina T."/>
            <person name="Hammon N."/>
            <person name="Israni S."/>
            <person name="Pitluck S."/>
            <person name="Bryant D."/>
            <person name="Schmutz J."/>
            <person name="Larimer F."/>
            <person name="Land M."/>
            <person name="Kyrpides N."/>
            <person name="Ivanova N."/>
            <person name="Richardson P."/>
        </authorList>
    </citation>
    <scope>NUCLEOTIDE SEQUENCE [LARGE SCALE GENOMIC DNA]</scope>
    <source>
        <strain>DSM 273 / BCRC 81028 / 2530</strain>
    </source>
</reference>
<dbReference type="EC" id="4.1.1.11" evidence="1"/>
<dbReference type="EMBL" id="CP000096">
    <property type="protein sequence ID" value="ABB24623.1"/>
    <property type="molecule type" value="Genomic_DNA"/>
</dbReference>
<dbReference type="RefSeq" id="WP_011358495.1">
    <property type="nucleotide sequence ID" value="NC_007512.1"/>
</dbReference>
<dbReference type="SMR" id="Q3B208"/>
<dbReference type="STRING" id="319225.Plut_1769"/>
<dbReference type="KEGG" id="plt:Plut_1769"/>
<dbReference type="eggNOG" id="COG0853">
    <property type="taxonomic scope" value="Bacteria"/>
</dbReference>
<dbReference type="HOGENOM" id="CLU_115305_2_0_10"/>
<dbReference type="OrthoDB" id="9803983at2"/>
<dbReference type="UniPathway" id="UPA00028">
    <property type="reaction ID" value="UER00002"/>
</dbReference>
<dbReference type="Proteomes" id="UP000002709">
    <property type="component" value="Chromosome"/>
</dbReference>
<dbReference type="GO" id="GO:0005829">
    <property type="term" value="C:cytosol"/>
    <property type="evidence" value="ECO:0007669"/>
    <property type="project" value="TreeGrafter"/>
</dbReference>
<dbReference type="GO" id="GO:0004068">
    <property type="term" value="F:aspartate 1-decarboxylase activity"/>
    <property type="evidence" value="ECO:0007669"/>
    <property type="project" value="UniProtKB-UniRule"/>
</dbReference>
<dbReference type="GO" id="GO:0006523">
    <property type="term" value="P:alanine biosynthetic process"/>
    <property type="evidence" value="ECO:0007669"/>
    <property type="project" value="InterPro"/>
</dbReference>
<dbReference type="GO" id="GO:0015940">
    <property type="term" value="P:pantothenate biosynthetic process"/>
    <property type="evidence" value="ECO:0007669"/>
    <property type="project" value="UniProtKB-UniRule"/>
</dbReference>
<dbReference type="CDD" id="cd06919">
    <property type="entry name" value="Asp_decarbox"/>
    <property type="match status" value="1"/>
</dbReference>
<dbReference type="Gene3D" id="2.40.40.20">
    <property type="match status" value="1"/>
</dbReference>
<dbReference type="HAMAP" id="MF_00446">
    <property type="entry name" value="PanD"/>
    <property type="match status" value="1"/>
</dbReference>
<dbReference type="InterPro" id="IPR009010">
    <property type="entry name" value="Asp_de-COase-like_dom_sf"/>
</dbReference>
<dbReference type="InterPro" id="IPR003190">
    <property type="entry name" value="Asp_decarbox"/>
</dbReference>
<dbReference type="NCBIfam" id="TIGR00223">
    <property type="entry name" value="panD"/>
    <property type="match status" value="1"/>
</dbReference>
<dbReference type="PANTHER" id="PTHR21012">
    <property type="entry name" value="ASPARTATE 1-DECARBOXYLASE"/>
    <property type="match status" value="1"/>
</dbReference>
<dbReference type="PANTHER" id="PTHR21012:SF0">
    <property type="entry name" value="ASPARTATE 1-DECARBOXYLASE"/>
    <property type="match status" value="1"/>
</dbReference>
<dbReference type="Pfam" id="PF02261">
    <property type="entry name" value="Asp_decarbox"/>
    <property type="match status" value="1"/>
</dbReference>
<dbReference type="PIRSF" id="PIRSF006246">
    <property type="entry name" value="Asp_decarbox"/>
    <property type="match status" value="1"/>
</dbReference>
<dbReference type="SUPFAM" id="SSF50692">
    <property type="entry name" value="ADC-like"/>
    <property type="match status" value="1"/>
</dbReference>
<gene>
    <name evidence="1" type="primary">panD</name>
    <name type="ordered locus">Plut_1769</name>
</gene>
<accession>Q3B208</accession>
<proteinExistence type="inferred from homology"/>
<protein>
    <recommendedName>
        <fullName evidence="1">Aspartate 1-decarboxylase</fullName>
        <ecNumber evidence="1">4.1.1.11</ecNumber>
    </recommendedName>
    <alternativeName>
        <fullName evidence="1">Aspartate alpha-decarboxylase</fullName>
    </alternativeName>
    <component>
        <recommendedName>
            <fullName evidence="1">Aspartate 1-decarboxylase beta chain</fullName>
        </recommendedName>
    </component>
    <component>
        <recommendedName>
            <fullName evidence="1">Aspartate 1-decarboxylase alpha chain</fullName>
        </recommendedName>
    </component>
</protein>
<feature type="chain" id="PRO_0000236881" description="Aspartate 1-decarboxylase beta chain" evidence="1">
    <location>
        <begin position="1"/>
        <end position="24"/>
    </location>
</feature>
<feature type="chain" id="PRO_0000236882" description="Aspartate 1-decarboxylase alpha chain" evidence="1">
    <location>
        <begin position="25"/>
        <end position="128"/>
    </location>
</feature>
<feature type="active site" description="Schiff-base intermediate with substrate; via pyruvic acid" evidence="1">
    <location>
        <position position="25"/>
    </location>
</feature>
<feature type="active site" description="Proton donor" evidence="1">
    <location>
        <position position="58"/>
    </location>
</feature>
<feature type="binding site" evidence="1">
    <location>
        <position position="57"/>
    </location>
    <ligand>
        <name>substrate</name>
    </ligand>
</feature>
<feature type="binding site" evidence="1">
    <location>
        <begin position="73"/>
        <end position="75"/>
    </location>
    <ligand>
        <name>substrate</name>
    </ligand>
</feature>
<feature type="modified residue" description="Pyruvic acid (Ser)" evidence="1">
    <location>
        <position position="25"/>
    </location>
</feature>
<sequence>MKVHLLKSKIHNAIVTSGDLEYEGSITIDCELLEKADMIPNEKVLVVNNNNGERFETYIINGVRGSRVIQLNGAAARCALPGDEIIIMTFCEIDAEESREFKPMVLIVDRNNNPKRRHRIGEEDEQLD</sequence>
<name>PAND_CHLL3</name>
<keyword id="KW-0068">Autocatalytic cleavage</keyword>
<keyword id="KW-0963">Cytoplasm</keyword>
<keyword id="KW-0210">Decarboxylase</keyword>
<keyword id="KW-0456">Lyase</keyword>
<keyword id="KW-0566">Pantothenate biosynthesis</keyword>
<keyword id="KW-0670">Pyruvate</keyword>
<keyword id="KW-1185">Reference proteome</keyword>
<keyword id="KW-0704">Schiff base</keyword>
<keyword id="KW-0865">Zymogen</keyword>
<comment type="function">
    <text evidence="1">Catalyzes the pyruvoyl-dependent decarboxylation of aspartate to produce beta-alanine.</text>
</comment>
<comment type="catalytic activity">
    <reaction evidence="1">
        <text>L-aspartate + H(+) = beta-alanine + CO2</text>
        <dbReference type="Rhea" id="RHEA:19497"/>
        <dbReference type="ChEBI" id="CHEBI:15378"/>
        <dbReference type="ChEBI" id="CHEBI:16526"/>
        <dbReference type="ChEBI" id="CHEBI:29991"/>
        <dbReference type="ChEBI" id="CHEBI:57966"/>
        <dbReference type="EC" id="4.1.1.11"/>
    </reaction>
</comment>
<comment type="cofactor">
    <cofactor evidence="1">
        <name>pyruvate</name>
        <dbReference type="ChEBI" id="CHEBI:15361"/>
    </cofactor>
    <text evidence="1">Binds 1 pyruvoyl group covalently per subunit.</text>
</comment>
<comment type="pathway">
    <text evidence="1">Cofactor biosynthesis; (R)-pantothenate biosynthesis; beta-alanine from L-aspartate: step 1/1.</text>
</comment>
<comment type="subunit">
    <text evidence="1">Heterooctamer of four alpha and four beta subunits.</text>
</comment>
<comment type="subcellular location">
    <subcellularLocation>
        <location evidence="1">Cytoplasm</location>
    </subcellularLocation>
</comment>
<comment type="PTM">
    <text evidence="1">Is synthesized initially as an inactive proenzyme, which is activated by self-cleavage at a specific serine bond to produce a beta-subunit with a hydroxyl group at its C-terminus and an alpha-subunit with a pyruvoyl group at its N-terminus.</text>
</comment>
<comment type="similarity">
    <text evidence="1">Belongs to the PanD family.</text>
</comment>
<organism>
    <name type="scientific">Chlorobium luteolum (strain DSM 273 / BCRC 81028 / 2530)</name>
    <name type="common">Pelodictyon luteolum</name>
    <dbReference type="NCBI Taxonomy" id="319225"/>
    <lineage>
        <taxon>Bacteria</taxon>
        <taxon>Pseudomonadati</taxon>
        <taxon>Chlorobiota</taxon>
        <taxon>Chlorobiia</taxon>
        <taxon>Chlorobiales</taxon>
        <taxon>Chlorobiaceae</taxon>
        <taxon>Chlorobium/Pelodictyon group</taxon>
        <taxon>Pelodictyon</taxon>
    </lineage>
</organism>